<organism>
    <name type="scientific">Mus musculus</name>
    <name type="common">Mouse</name>
    <dbReference type="NCBI Taxonomy" id="10090"/>
    <lineage>
        <taxon>Eukaryota</taxon>
        <taxon>Metazoa</taxon>
        <taxon>Chordata</taxon>
        <taxon>Craniata</taxon>
        <taxon>Vertebrata</taxon>
        <taxon>Euteleostomi</taxon>
        <taxon>Mammalia</taxon>
        <taxon>Eutheria</taxon>
        <taxon>Euarchontoglires</taxon>
        <taxon>Glires</taxon>
        <taxon>Rodentia</taxon>
        <taxon>Myomorpha</taxon>
        <taxon>Muroidea</taxon>
        <taxon>Muridae</taxon>
        <taxon>Murinae</taxon>
        <taxon>Mus</taxon>
        <taxon>Mus</taxon>
    </lineage>
</organism>
<protein>
    <recommendedName>
        <fullName>Mitochondrial basic amino acids transporter</fullName>
    </recommendedName>
    <alternativeName>
        <fullName evidence="6">Carnitine/acylcarnitine translocase-like</fullName>
        <shortName evidence="6">CACT-like</shortName>
    </alternativeName>
    <alternativeName>
        <fullName>Mitochondrial carnitine/acylcarnitine carrier protein CACL</fullName>
    </alternativeName>
    <alternativeName>
        <fullName evidence="7">Mitochondrial ornithine transporter 3</fullName>
    </alternativeName>
    <alternativeName>
        <fullName>Solute carrier family 25 member 29</fullName>
    </alternativeName>
</protein>
<evidence type="ECO:0000250" key="1">
    <source>
        <dbReference type="UniProtKB" id="Q8N8R3"/>
    </source>
</evidence>
<evidence type="ECO:0000255" key="2"/>
<evidence type="ECO:0000256" key="3">
    <source>
        <dbReference type="SAM" id="MobiDB-lite"/>
    </source>
</evidence>
<evidence type="ECO:0000269" key="4">
    <source>
    </source>
</evidence>
<evidence type="ECO:0000269" key="5">
    <source>
    </source>
</evidence>
<evidence type="ECO:0000303" key="6">
    <source>
    </source>
</evidence>
<evidence type="ECO:0000303" key="7">
    <source>
    </source>
</evidence>
<evidence type="ECO:0000305" key="8"/>
<proteinExistence type="evidence at protein level"/>
<comment type="function">
    <text evidence="1 5">Mitochondrial transporter of arginine, lysine, homoarginine, methylarginine (By similarity). Transports with a much lesser extent, ornithine and histidine (PubMed:19287344). Does not transport carnitine nor acylcarnitines. Functions by both counter-exchange and uniport mechanisms. Plays a physiological role in the import of basic amino acids into mitochondria for mitochondrial protein synthesis and amino acid degradation (By similarity).</text>
</comment>
<comment type="catalytic activity">
    <reaction evidence="1">
        <text>L-lysine(out) + L-arginine(in) = L-lysine(in) + L-arginine(out)</text>
        <dbReference type="Rhea" id="RHEA:70827"/>
        <dbReference type="ChEBI" id="CHEBI:32551"/>
        <dbReference type="ChEBI" id="CHEBI:32682"/>
    </reaction>
</comment>
<comment type="catalytic activity">
    <reaction evidence="1">
        <text>L-histidine(out) + L-arginine(in) = L-histidine(in) + L-arginine(out)</text>
        <dbReference type="Rhea" id="RHEA:71063"/>
        <dbReference type="ChEBI" id="CHEBI:32682"/>
        <dbReference type="ChEBI" id="CHEBI:57595"/>
    </reaction>
</comment>
<comment type="catalytic activity">
    <reaction evidence="1">
        <text>L-ornithine(in) + L-arginine(out) = L-ornithine(out) + L-arginine(in)</text>
        <dbReference type="Rhea" id="RHEA:34991"/>
        <dbReference type="ChEBI" id="CHEBI:32682"/>
        <dbReference type="ChEBI" id="CHEBI:46911"/>
    </reaction>
</comment>
<comment type="catalytic activity">
    <reaction evidence="1">
        <text>L-homoarginine(in) + L-arginine(out) = L-homoarginine(out) + L-arginine(in)</text>
        <dbReference type="Rhea" id="RHEA:72799"/>
        <dbReference type="ChEBI" id="CHEBI:32682"/>
        <dbReference type="ChEBI" id="CHEBI:143006"/>
    </reaction>
</comment>
<comment type="catalytic activity">
    <reaction evidence="1">
        <text>N(omega)-methyl-L-arginine(in) + L-arginine(out) = N(omega)-methyl-L-arginine(out) + L-arginine(in)</text>
        <dbReference type="Rhea" id="RHEA:72803"/>
        <dbReference type="ChEBI" id="CHEBI:32682"/>
        <dbReference type="ChEBI" id="CHEBI:114953"/>
    </reaction>
</comment>
<comment type="catalytic activity">
    <reaction evidence="1">
        <text>L-arginine(in) = L-arginine(out)</text>
        <dbReference type="Rhea" id="RHEA:32143"/>
        <dbReference type="ChEBI" id="CHEBI:32682"/>
    </reaction>
</comment>
<comment type="catalytic activity">
    <reaction evidence="1">
        <text>L-lysine(in) = L-lysine(out)</text>
        <dbReference type="Rhea" id="RHEA:70935"/>
        <dbReference type="ChEBI" id="CHEBI:32551"/>
    </reaction>
</comment>
<comment type="catalytic activity">
    <reaction evidence="1">
        <text>L-ornithine(in) = L-ornithine(out)</text>
        <dbReference type="Rhea" id="RHEA:71199"/>
        <dbReference type="ChEBI" id="CHEBI:46911"/>
    </reaction>
</comment>
<comment type="catalytic activity">
    <reaction evidence="1">
        <text>L-histidine(out) = L-histidine(in)</text>
        <dbReference type="Rhea" id="RHEA:72807"/>
        <dbReference type="ChEBI" id="CHEBI:57595"/>
    </reaction>
</comment>
<comment type="subcellular location">
    <subcellularLocation>
        <location evidence="4 5">Mitochondrion inner membrane</location>
        <topology evidence="2">Multi-pass membrane protein</topology>
    </subcellularLocation>
</comment>
<comment type="tissue specificity">
    <text evidence="4 5">Widely expressed, with highest levels in the brain, including cortex, cerebellum, hippocampus and hypothalamus, and moderate levels in liver, kidney, heart and testis.</text>
</comment>
<comment type="induction">
    <text evidence="4">By partial hepactectomy and fasting.</text>
</comment>
<comment type="similarity">
    <text evidence="8">Belongs to the mitochondrial carrier (TC 2.A.29) family.</text>
</comment>
<comment type="caution">
    <text evidence="1 4">Was initially proposed to transport palmitoylcarnitine, based on complementation experiments in yeast mutants lacking CRC1 and CIT2 and release of radiolabeled carnitine from mitochondria incubated with radiolabeled palmitoylcarnithine (PubMed:12882971). Later experiments done primarily with human indicate the protein functions instead as transporter of basic amino acids (By similarity).</text>
</comment>
<sequence>MALDFLAGCAGGVAGVIVGHPFDIVKVRLQVQSTEKPQYRGTLHCFQSIIKQESVLGLYKGLGSPLMGLTFINALVFGVQGNTLRALGQDSPLNQFLAGAAAGAIQCVICCPMELAKTRLQLQAVGPARTYKGSLDCLVQIYRHEGLRGINRGMVSTLLRETPSFGVYFLTYDVMTRAMGCEPGDRLLVPKLLLAGGTSGITSWLSTYPMDVVKSRLQADGLQGTPRYRGIVDCMRQSYQAEGWQVFTRGLASTLLRAFPVNAATFATVTVVLTYTRGEEAQVDSEAALGTSPTPAGSALAQPSSL</sequence>
<reference key="1">
    <citation type="journal article" date="2003" name="J. Biol. Chem.">
        <title>A novel mitochondrial carnitine-acylcarnitine translocase induced by partial hepatectomy and fasting.</title>
        <authorList>
            <person name="Sekoguchi E."/>
            <person name="Sato N."/>
            <person name="Yasui A."/>
            <person name="Fukada S."/>
            <person name="Nimura Y."/>
            <person name="Aburatani H."/>
            <person name="Ikeda K."/>
            <person name="Matsuura A."/>
        </authorList>
    </citation>
    <scope>NUCLEOTIDE SEQUENCE [MRNA]</scope>
    <scope>FUNCTION</scope>
    <scope>SUBCELLULAR LOCATION</scope>
    <scope>TISSUE SPECIFICITY</scope>
    <scope>INDUCTION</scope>
</reference>
<reference key="2">
    <citation type="journal article" date="2005" name="Science">
        <title>The transcriptional landscape of the mammalian genome.</title>
        <authorList>
            <person name="Carninci P."/>
            <person name="Kasukawa T."/>
            <person name="Katayama S."/>
            <person name="Gough J."/>
            <person name="Frith M.C."/>
            <person name="Maeda N."/>
            <person name="Oyama R."/>
            <person name="Ravasi T."/>
            <person name="Lenhard B."/>
            <person name="Wells C."/>
            <person name="Kodzius R."/>
            <person name="Shimokawa K."/>
            <person name="Bajic V.B."/>
            <person name="Brenner S.E."/>
            <person name="Batalov S."/>
            <person name="Forrest A.R."/>
            <person name="Zavolan M."/>
            <person name="Davis M.J."/>
            <person name="Wilming L.G."/>
            <person name="Aidinis V."/>
            <person name="Allen J.E."/>
            <person name="Ambesi-Impiombato A."/>
            <person name="Apweiler R."/>
            <person name="Aturaliya R.N."/>
            <person name="Bailey T.L."/>
            <person name="Bansal M."/>
            <person name="Baxter L."/>
            <person name="Beisel K.W."/>
            <person name="Bersano T."/>
            <person name="Bono H."/>
            <person name="Chalk A.M."/>
            <person name="Chiu K.P."/>
            <person name="Choudhary V."/>
            <person name="Christoffels A."/>
            <person name="Clutterbuck D.R."/>
            <person name="Crowe M.L."/>
            <person name="Dalla E."/>
            <person name="Dalrymple B.P."/>
            <person name="de Bono B."/>
            <person name="Della Gatta G."/>
            <person name="di Bernardo D."/>
            <person name="Down T."/>
            <person name="Engstrom P."/>
            <person name="Fagiolini M."/>
            <person name="Faulkner G."/>
            <person name="Fletcher C.F."/>
            <person name="Fukushima T."/>
            <person name="Furuno M."/>
            <person name="Futaki S."/>
            <person name="Gariboldi M."/>
            <person name="Georgii-Hemming P."/>
            <person name="Gingeras T.R."/>
            <person name="Gojobori T."/>
            <person name="Green R.E."/>
            <person name="Gustincich S."/>
            <person name="Harbers M."/>
            <person name="Hayashi Y."/>
            <person name="Hensch T.K."/>
            <person name="Hirokawa N."/>
            <person name="Hill D."/>
            <person name="Huminiecki L."/>
            <person name="Iacono M."/>
            <person name="Ikeo K."/>
            <person name="Iwama A."/>
            <person name="Ishikawa T."/>
            <person name="Jakt M."/>
            <person name="Kanapin A."/>
            <person name="Katoh M."/>
            <person name="Kawasawa Y."/>
            <person name="Kelso J."/>
            <person name="Kitamura H."/>
            <person name="Kitano H."/>
            <person name="Kollias G."/>
            <person name="Krishnan S.P."/>
            <person name="Kruger A."/>
            <person name="Kummerfeld S.K."/>
            <person name="Kurochkin I.V."/>
            <person name="Lareau L.F."/>
            <person name="Lazarevic D."/>
            <person name="Lipovich L."/>
            <person name="Liu J."/>
            <person name="Liuni S."/>
            <person name="McWilliam S."/>
            <person name="Madan Babu M."/>
            <person name="Madera M."/>
            <person name="Marchionni L."/>
            <person name="Matsuda H."/>
            <person name="Matsuzawa S."/>
            <person name="Miki H."/>
            <person name="Mignone F."/>
            <person name="Miyake S."/>
            <person name="Morris K."/>
            <person name="Mottagui-Tabar S."/>
            <person name="Mulder N."/>
            <person name="Nakano N."/>
            <person name="Nakauchi H."/>
            <person name="Ng P."/>
            <person name="Nilsson R."/>
            <person name="Nishiguchi S."/>
            <person name="Nishikawa S."/>
            <person name="Nori F."/>
            <person name="Ohara O."/>
            <person name="Okazaki Y."/>
            <person name="Orlando V."/>
            <person name="Pang K.C."/>
            <person name="Pavan W.J."/>
            <person name="Pavesi G."/>
            <person name="Pesole G."/>
            <person name="Petrovsky N."/>
            <person name="Piazza S."/>
            <person name="Reed J."/>
            <person name="Reid J.F."/>
            <person name="Ring B.Z."/>
            <person name="Ringwald M."/>
            <person name="Rost B."/>
            <person name="Ruan Y."/>
            <person name="Salzberg S.L."/>
            <person name="Sandelin A."/>
            <person name="Schneider C."/>
            <person name="Schoenbach C."/>
            <person name="Sekiguchi K."/>
            <person name="Semple C.A."/>
            <person name="Seno S."/>
            <person name="Sessa L."/>
            <person name="Sheng Y."/>
            <person name="Shibata Y."/>
            <person name="Shimada H."/>
            <person name="Shimada K."/>
            <person name="Silva D."/>
            <person name="Sinclair B."/>
            <person name="Sperling S."/>
            <person name="Stupka E."/>
            <person name="Sugiura K."/>
            <person name="Sultana R."/>
            <person name="Takenaka Y."/>
            <person name="Taki K."/>
            <person name="Tammoja K."/>
            <person name="Tan S.L."/>
            <person name="Tang S."/>
            <person name="Taylor M.S."/>
            <person name="Tegner J."/>
            <person name="Teichmann S.A."/>
            <person name="Ueda H.R."/>
            <person name="van Nimwegen E."/>
            <person name="Verardo R."/>
            <person name="Wei C.L."/>
            <person name="Yagi K."/>
            <person name="Yamanishi H."/>
            <person name="Zabarovsky E."/>
            <person name="Zhu S."/>
            <person name="Zimmer A."/>
            <person name="Hide W."/>
            <person name="Bult C."/>
            <person name="Grimmond S.M."/>
            <person name="Teasdale R.D."/>
            <person name="Liu E.T."/>
            <person name="Brusic V."/>
            <person name="Quackenbush J."/>
            <person name="Wahlestedt C."/>
            <person name="Mattick J.S."/>
            <person name="Hume D.A."/>
            <person name="Kai C."/>
            <person name="Sasaki D."/>
            <person name="Tomaru Y."/>
            <person name="Fukuda S."/>
            <person name="Kanamori-Katayama M."/>
            <person name="Suzuki M."/>
            <person name="Aoki J."/>
            <person name="Arakawa T."/>
            <person name="Iida J."/>
            <person name="Imamura K."/>
            <person name="Itoh M."/>
            <person name="Kato T."/>
            <person name="Kawaji H."/>
            <person name="Kawagashira N."/>
            <person name="Kawashima T."/>
            <person name="Kojima M."/>
            <person name="Kondo S."/>
            <person name="Konno H."/>
            <person name="Nakano K."/>
            <person name="Ninomiya N."/>
            <person name="Nishio T."/>
            <person name="Okada M."/>
            <person name="Plessy C."/>
            <person name="Shibata K."/>
            <person name="Shiraki T."/>
            <person name="Suzuki S."/>
            <person name="Tagami M."/>
            <person name="Waki K."/>
            <person name="Watahiki A."/>
            <person name="Okamura-Oho Y."/>
            <person name="Suzuki H."/>
            <person name="Kawai J."/>
            <person name="Hayashizaki Y."/>
        </authorList>
    </citation>
    <scope>NUCLEOTIDE SEQUENCE [LARGE SCALE MRNA]</scope>
    <source>
        <strain>C57BL/6J</strain>
        <tissue>Corpus striatum</tissue>
    </source>
</reference>
<reference key="3">
    <citation type="journal article" date="2004" name="Genome Res.">
        <title>The status, quality, and expansion of the NIH full-length cDNA project: the Mammalian Gene Collection (MGC).</title>
        <authorList>
            <consortium name="The MGC Project Team"/>
        </authorList>
    </citation>
    <scope>NUCLEOTIDE SEQUENCE [LARGE SCALE MRNA]</scope>
    <source>
        <tissue>Mammary tumor</tissue>
    </source>
</reference>
<reference key="4">
    <citation type="journal article" date="2009" name="Pediatr. Res.">
        <title>The human and mouse SLC25A29 mitochondrial transporters rescue the deficient ornithine metabolism in fibroblasts of patients with the hyperornithinemia-hyperammonemia-homocitrullinuria (HHH) syndrome.</title>
        <authorList>
            <person name="Camacho J.A."/>
            <person name="Rioseco-Camacho N."/>
        </authorList>
    </citation>
    <scope>FUNCTION</scope>
    <scope>SUBCELLULAR LOCATION</scope>
    <scope>TISSUE SPECIFICITY</scope>
</reference>
<reference key="5">
    <citation type="journal article" date="2010" name="Cell">
        <title>A tissue-specific atlas of mouse protein phosphorylation and expression.</title>
        <authorList>
            <person name="Huttlin E.L."/>
            <person name="Jedrychowski M.P."/>
            <person name="Elias J.E."/>
            <person name="Goswami T."/>
            <person name="Rad R."/>
            <person name="Beausoleil S.A."/>
            <person name="Villen J."/>
            <person name="Haas W."/>
            <person name="Sowa M.E."/>
            <person name="Gygi S.P."/>
        </authorList>
    </citation>
    <scope>IDENTIFICATION BY MASS SPECTROMETRY [LARGE SCALE ANALYSIS]</scope>
    <source>
        <tissue>Heart</tissue>
        <tissue>Kidney</tissue>
    </source>
</reference>
<name>S2529_MOUSE</name>
<feature type="chain" id="PRO_0000090633" description="Mitochondrial basic amino acids transporter">
    <location>
        <begin position="1"/>
        <end position="306"/>
    </location>
</feature>
<feature type="transmembrane region" description="Helical; Name=1" evidence="2">
    <location>
        <begin position="2"/>
        <end position="22"/>
    </location>
</feature>
<feature type="transmembrane region" description="Helical; Name=2" evidence="2">
    <location>
        <begin position="61"/>
        <end position="81"/>
    </location>
</feature>
<feature type="transmembrane region" description="Helical; Name=3" evidence="2">
    <location>
        <begin position="96"/>
        <end position="116"/>
    </location>
</feature>
<feature type="transmembrane region" description="Helical; Name=4" evidence="2">
    <location>
        <begin position="153"/>
        <end position="172"/>
    </location>
</feature>
<feature type="transmembrane region" description="Helical; Name=5" evidence="2">
    <location>
        <begin position="187"/>
        <end position="207"/>
    </location>
</feature>
<feature type="transmembrane region" description="Helical; Name=6" evidence="2">
    <location>
        <begin position="255"/>
        <end position="275"/>
    </location>
</feature>
<feature type="repeat" description="Solcar 1">
    <location>
        <begin position="2"/>
        <end position="86"/>
    </location>
</feature>
<feature type="repeat" description="Solcar 2">
    <location>
        <begin position="90"/>
        <end position="178"/>
    </location>
</feature>
<feature type="repeat" description="Solcar 3">
    <location>
        <begin position="190"/>
        <end position="275"/>
    </location>
</feature>
<feature type="region of interest" description="Disordered" evidence="3">
    <location>
        <begin position="284"/>
        <end position="306"/>
    </location>
</feature>
<feature type="compositionally biased region" description="Polar residues" evidence="3">
    <location>
        <begin position="291"/>
        <end position="306"/>
    </location>
</feature>
<accession>Q8BL03</accession>
<accession>Q922X4</accession>
<keyword id="KW-0029">Amino-acid transport</keyword>
<keyword id="KW-0472">Membrane</keyword>
<keyword id="KW-0496">Mitochondrion</keyword>
<keyword id="KW-0999">Mitochondrion inner membrane</keyword>
<keyword id="KW-1185">Reference proteome</keyword>
<keyword id="KW-0677">Repeat</keyword>
<keyword id="KW-0812">Transmembrane</keyword>
<keyword id="KW-1133">Transmembrane helix</keyword>
<keyword id="KW-0813">Transport</keyword>
<gene>
    <name type="primary">Slc25a29</name>
    <name evidence="7" type="synonym">Ornt3</name>
</gene>
<dbReference type="EMBL" id="AK047628">
    <property type="protein sequence ID" value="BAC33105.1"/>
    <property type="molecule type" value="mRNA"/>
</dbReference>
<dbReference type="EMBL" id="BC006711">
    <property type="protein sequence ID" value="AAH06711.1"/>
    <property type="molecule type" value="mRNA"/>
</dbReference>
<dbReference type="CCDS" id="CCDS26164.1"/>
<dbReference type="RefSeq" id="NP_851845.1">
    <property type="nucleotide sequence ID" value="NM_181328.3"/>
</dbReference>
<dbReference type="SMR" id="Q8BL03"/>
<dbReference type="BioGRID" id="229553">
    <property type="interactions" value="1"/>
</dbReference>
<dbReference type="FunCoup" id="Q8BL03">
    <property type="interactions" value="810"/>
</dbReference>
<dbReference type="STRING" id="10090.ENSMUSP00000021693"/>
<dbReference type="TCDB" id="2.A.29.8.5">
    <property type="family name" value="the mitochondrial carrier (mc) family"/>
</dbReference>
<dbReference type="GlyGen" id="Q8BL03">
    <property type="glycosylation" value="1 site"/>
</dbReference>
<dbReference type="PhosphoSitePlus" id="Q8BL03"/>
<dbReference type="SwissPalm" id="Q8BL03"/>
<dbReference type="PaxDb" id="10090-ENSMUSP00000021693"/>
<dbReference type="PeptideAtlas" id="Q8BL03"/>
<dbReference type="ProteomicsDB" id="295839"/>
<dbReference type="Pumba" id="Q8BL03"/>
<dbReference type="Antibodypedia" id="14405">
    <property type="antibodies" value="32 antibodies from 16 providers"/>
</dbReference>
<dbReference type="DNASU" id="214663"/>
<dbReference type="Ensembl" id="ENSMUST00000021693.4">
    <property type="protein sequence ID" value="ENSMUSP00000021693.4"/>
    <property type="gene ID" value="ENSMUSG00000021265.4"/>
</dbReference>
<dbReference type="GeneID" id="214663"/>
<dbReference type="KEGG" id="mmu:214663"/>
<dbReference type="UCSC" id="uc007pad.1">
    <property type="organism name" value="mouse"/>
</dbReference>
<dbReference type="AGR" id="MGI:2444911"/>
<dbReference type="CTD" id="123096"/>
<dbReference type="MGI" id="MGI:2444911">
    <property type="gene designation" value="Slc25a29"/>
</dbReference>
<dbReference type="VEuPathDB" id="HostDB:ENSMUSG00000021265"/>
<dbReference type="eggNOG" id="KOG0762">
    <property type="taxonomic scope" value="Eukaryota"/>
</dbReference>
<dbReference type="GeneTree" id="ENSGT00940000157766"/>
<dbReference type="HOGENOM" id="CLU_015166_16_1_1"/>
<dbReference type="InParanoid" id="Q8BL03"/>
<dbReference type="OMA" id="VYRESGW"/>
<dbReference type="OrthoDB" id="193856at2759"/>
<dbReference type="PhylomeDB" id="Q8BL03"/>
<dbReference type="TreeFam" id="TF351739"/>
<dbReference type="Reactome" id="R-MMU-352230">
    <property type="pathway name" value="Amino acid transport across the plasma membrane"/>
</dbReference>
<dbReference type="BioGRID-ORCS" id="214663">
    <property type="hits" value="0 hits in 82 CRISPR screens"/>
</dbReference>
<dbReference type="ChiTaRS" id="Slc25a29">
    <property type="organism name" value="mouse"/>
</dbReference>
<dbReference type="PRO" id="PR:Q8BL03"/>
<dbReference type="Proteomes" id="UP000000589">
    <property type="component" value="Chromosome 12"/>
</dbReference>
<dbReference type="RNAct" id="Q8BL03">
    <property type="molecule type" value="protein"/>
</dbReference>
<dbReference type="Bgee" id="ENSMUSG00000021265">
    <property type="expression patterns" value="Expressed in gastrula and 233 other cell types or tissues"/>
</dbReference>
<dbReference type="GO" id="GO:0005743">
    <property type="term" value="C:mitochondrial inner membrane"/>
    <property type="evidence" value="ECO:0007669"/>
    <property type="project" value="UniProtKB-SubCell"/>
</dbReference>
<dbReference type="GO" id="GO:0005739">
    <property type="term" value="C:mitochondrion"/>
    <property type="evidence" value="ECO:0000314"/>
    <property type="project" value="UniProtKB"/>
</dbReference>
<dbReference type="GO" id="GO:0015174">
    <property type="term" value="F:basic amino acid transmembrane transporter activity"/>
    <property type="evidence" value="ECO:0000315"/>
    <property type="project" value="UniProtKB"/>
</dbReference>
<dbReference type="GO" id="GO:0005289">
    <property type="term" value="F:high-affinity L-arginine transmembrane transporter activity"/>
    <property type="evidence" value="ECO:0000250"/>
    <property type="project" value="UniProtKB"/>
</dbReference>
<dbReference type="GO" id="GO:0005292">
    <property type="term" value="F:high-affinity lysine transmembrane transporter activity"/>
    <property type="evidence" value="ECO:0000250"/>
    <property type="project" value="UniProtKB"/>
</dbReference>
<dbReference type="GO" id="GO:0015227">
    <property type="term" value="F:O-acyl-L-carnitine transmembrane transporter activity"/>
    <property type="evidence" value="ECO:0000314"/>
    <property type="project" value="MGI"/>
</dbReference>
<dbReference type="GO" id="GO:1903826">
    <property type="term" value="P:L-arginine transmembrane transport"/>
    <property type="evidence" value="ECO:0000250"/>
    <property type="project" value="UniProtKB"/>
</dbReference>
<dbReference type="GO" id="GO:0089709">
    <property type="term" value="P:L-histidine transmembrane transport"/>
    <property type="evidence" value="ECO:0000250"/>
    <property type="project" value="UniProtKB"/>
</dbReference>
<dbReference type="GO" id="GO:1903401">
    <property type="term" value="P:L-lysine transmembrane transport"/>
    <property type="evidence" value="ECO:0000250"/>
    <property type="project" value="UniProtKB"/>
</dbReference>
<dbReference type="GO" id="GO:1990575">
    <property type="term" value="P:mitochondrial L-ornithine transmembrane transport"/>
    <property type="evidence" value="ECO:0000315"/>
    <property type="project" value="UniProtKB"/>
</dbReference>
<dbReference type="GO" id="GO:1902616">
    <property type="term" value="P:O-acyl-L-carnitine transmembrane transport"/>
    <property type="evidence" value="ECO:0000314"/>
    <property type="project" value="MGI"/>
</dbReference>
<dbReference type="GO" id="GO:0015822">
    <property type="term" value="P:ornithine transport"/>
    <property type="evidence" value="ECO:0000250"/>
    <property type="project" value="UniProtKB"/>
</dbReference>
<dbReference type="FunFam" id="1.50.40.10:FF:000037">
    <property type="entry name" value="Solute carrier family 25 member 29"/>
    <property type="match status" value="1"/>
</dbReference>
<dbReference type="Gene3D" id="1.50.40.10">
    <property type="entry name" value="Mitochondrial carrier domain"/>
    <property type="match status" value="1"/>
</dbReference>
<dbReference type="InterPro" id="IPR002067">
    <property type="entry name" value="Mit_carrier"/>
</dbReference>
<dbReference type="InterPro" id="IPR050567">
    <property type="entry name" value="Mitochondrial_Carrier"/>
</dbReference>
<dbReference type="InterPro" id="IPR018108">
    <property type="entry name" value="Mitochondrial_sb/sol_carrier"/>
</dbReference>
<dbReference type="InterPro" id="IPR023395">
    <property type="entry name" value="Mt_carrier_dom_sf"/>
</dbReference>
<dbReference type="PANTHER" id="PTHR45624:SF61">
    <property type="entry name" value="MITOCHONDRIAL BASIC AMINO ACIDS TRANSPORTER"/>
    <property type="match status" value="1"/>
</dbReference>
<dbReference type="PANTHER" id="PTHR45624">
    <property type="entry name" value="MITOCHONDRIAL BASIC AMINO ACIDS TRANSPORTER-RELATED"/>
    <property type="match status" value="1"/>
</dbReference>
<dbReference type="Pfam" id="PF00153">
    <property type="entry name" value="Mito_carr"/>
    <property type="match status" value="3"/>
</dbReference>
<dbReference type="PRINTS" id="PR00926">
    <property type="entry name" value="MITOCARRIER"/>
</dbReference>
<dbReference type="SUPFAM" id="SSF103506">
    <property type="entry name" value="Mitochondrial carrier"/>
    <property type="match status" value="1"/>
</dbReference>
<dbReference type="PROSITE" id="PS50920">
    <property type="entry name" value="SOLCAR"/>
    <property type="match status" value="3"/>
</dbReference>